<feature type="chain" id="PRO_1000090254" description="Cobyric acid synthase">
    <location>
        <begin position="1"/>
        <end position="488"/>
    </location>
</feature>
<feature type="domain" description="GATase cobBQ-type" evidence="1">
    <location>
        <begin position="252"/>
        <end position="442"/>
    </location>
</feature>
<feature type="active site" description="Nucleophile" evidence="1">
    <location>
        <position position="334"/>
    </location>
</feature>
<feature type="active site" evidence="1">
    <location>
        <position position="434"/>
    </location>
</feature>
<protein>
    <recommendedName>
        <fullName evidence="1">Cobyric acid synthase</fullName>
    </recommendedName>
</protein>
<gene>
    <name evidence="1" type="primary">cobQ</name>
    <name type="ordered locus">Xaut_3778</name>
</gene>
<proteinExistence type="inferred from homology"/>
<sequence>MARALMFQGTGSDVGKSLLVAGLARAFTLRGLKVRPFKPQNMSNNAAVTADGGEIGRAQALQARAARVPLSVHMNPVLLKPQGETGAQVVVQGRVHGTAKAAAYQGMKPSLLPFVLDSFDRLKAEADLVLVEGAGSASEVNLRTGDIANMGFARAADVPVVVIGDIDRGGVIASLVGTKAVIDAADAALIKGFVVNRFRGDPSLFATGMELIARQTGWAALGLVPHFSEAIRLPAEDALALSAPPAPKPRARTRICVPILPHVSNFDDLDPLDAEPSVEVRRIRPHETLPVDTDLVLLIGSKATIADLAALKAEGLHHDILAFARRGGHVMGLCGGYQMLGETIADPDGIEGEAKIARGLGLLKVHTVLSPEKRLVEVAGVALDPAVAAPFSGYEMHMGVTAGADAEQPFAVLSDGRQDGARSASGRVSGTYVHGLFASDAFRSGLLGALGGAPSQAAYEQGVEETLDRLAAHLAAHLDLDLLFSLAR</sequence>
<accession>A7ILW0</accession>
<evidence type="ECO:0000255" key="1">
    <source>
        <dbReference type="HAMAP-Rule" id="MF_00028"/>
    </source>
</evidence>
<dbReference type="EMBL" id="CP000781">
    <property type="protein sequence ID" value="ABS69003.1"/>
    <property type="molecule type" value="Genomic_DNA"/>
</dbReference>
<dbReference type="SMR" id="A7ILW0"/>
<dbReference type="STRING" id="78245.Xaut_3778"/>
<dbReference type="KEGG" id="xau:Xaut_3778"/>
<dbReference type="eggNOG" id="COG1492">
    <property type="taxonomic scope" value="Bacteria"/>
</dbReference>
<dbReference type="HOGENOM" id="CLU_019250_2_2_5"/>
<dbReference type="OrthoDB" id="9808302at2"/>
<dbReference type="PhylomeDB" id="A7ILW0"/>
<dbReference type="UniPathway" id="UPA00148"/>
<dbReference type="Proteomes" id="UP000002417">
    <property type="component" value="Chromosome"/>
</dbReference>
<dbReference type="GO" id="GO:0015420">
    <property type="term" value="F:ABC-type vitamin B12 transporter activity"/>
    <property type="evidence" value="ECO:0007669"/>
    <property type="project" value="UniProtKB-UniRule"/>
</dbReference>
<dbReference type="GO" id="GO:0003824">
    <property type="term" value="F:catalytic activity"/>
    <property type="evidence" value="ECO:0007669"/>
    <property type="project" value="InterPro"/>
</dbReference>
<dbReference type="GO" id="GO:0009236">
    <property type="term" value="P:cobalamin biosynthetic process"/>
    <property type="evidence" value="ECO:0007669"/>
    <property type="project" value="UniProtKB-UniRule"/>
</dbReference>
<dbReference type="CDD" id="cd01750">
    <property type="entry name" value="GATase1_CobQ"/>
    <property type="match status" value="1"/>
</dbReference>
<dbReference type="Gene3D" id="3.40.50.880">
    <property type="match status" value="1"/>
</dbReference>
<dbReference type="Gene3D" id="3.40.50.300">
    <property type="entry name" value="P-loop containing nucleotide triphosphate hydrolases"/>
    <property type="match status" value="1"/>
</dbReference>
<dbReference type="HAMAP" id="MF_00028">
    <property type="entry name" value="CobQ"/>
    <property type="match status" value="1"/>
</dbReference>
<dbReference type="InterPro" id="IPR029062">
    <property type="entry name" value="Class_I_gatase-like"/>
</dbReference>
<dbReference type="InterPro" id="IPR002586">
    <property type="entry name" value="CobQ/CobB/MinD/ParA_Nub-bd_dom"/>
</dbReference>
<dbReference type="InterPro" id="IPR033949">
    <property type="entry name" value="CobQ_GATase1"/>
</dbReference>
<dbReference type="InterPro" id="IPR004459">
    <property type="entry name" value="CobQ_synth"/>
</dbReference>
<dbReference type="InterPro" id="IPR011698">
    <property type="entry name" value="GATase_3"/>
</dbReference>
<dbReference type="InterPro" id="IPR027417">
    <property type="entry name" value="P-loop_NTPase"/>
</dbReference>
<dbReference type="NCBIfam" id="TIGR00313">
    <property type="entry name" value="cobQ"/>
    <property type="match status" value="1"/>
</dbReference>
<dbReference type="NCBIfam" id="NF001989">
    <property type="entry name" value="PRK00784.1"/>
    <property type="match status" value="1"/>
</dbReference>
<dbReference type="PANTHER" id="PTHR21343:SF1">
    <property type="entry name" value="COBYRIC ACID SYNTHASE"/>
    <property type="match status" value="1"/>
</dbReference>
<dbReference type="PANTHER" id="PTHR21343">
    <property type="entry name" value="DETHIOBIOTIN SYNTHETASE"/>
    <property type="match status" value="1"/>
</dbReference>
<dbReference type="Pfam" id="PF01656">
    <property type="entry name" value="CbiA"/>
    <property type="match status" value="1"/>
</dbReference>
<dbReference type="Pfam" id="PF07685">
    <property type="entry name" value="GATase_3"/>
    <property type="match status" value="1"/>
</dbReference>
<dbReference type="SUPFAM" id="SSF52317">
    <property type="entry name" value="Class I glutamine amidotransferase-like"/>
    <property type="match status" value="1"/>
</dbReference>
<dbReference type="SUPFAM" id="SSF52540">
    <property type="entry name" value="P-loop containing nucleoside triphosphate hydrolases"/>
    <property type="match status" value="1"/>
</dbReference>
<dbReference type="PROSITE" id="PS51274">
    <property type="entry name" value="GATASE_COBBQ"/>
    <property type="match status" value="1"/>
</dbReference>
<name>COBQ_XANP2</name>
<reference key="1">
    <citation type="submission" date="2007-07" db="EMBL/GenBank/DDBJ databases">
        <title>Complete sequence of chromosome of Xanthobacter autotrophicus Py2.</title>
        <authorList>
            <consortium name="US DOE Joint Genome Institute"/>
            <person name="Copeland A."/>
            <person name="Lucas S."/>
            <person name="Lapidus A."/>
            <person name="Barry K."/>
            <person name="Glavina del Rio T."/>
            <person name="Hammon N."/>
            <person name="Israni S."/>
            <person name="Dalin E."/>
            <person name="Tice H."/>
            <person name="Pitluck S."/>
            <person name="Sims D."/>
            <person name="Brettin T."/>
            <person name="Bruce D."/>
            <person name="Detter J.C."/>
            <person name="Han C."/>
            <person name="Tapia R."/>
            <person name="Brainard J."/>
            <person name="Schmutz J."/>
            <person name="Larimer F."/>
            <person name="Land M."/>
            <person name="Hauser L."/>
            <person name="Kyrpides N."/>
            <person name="Kim E."/>
            <person name="Ensigns S.A."/>
            <person name="Richardson P."/>
        </authorList>
    </citation>
    <scope>NUCLEOTIDE SEQUENCE [LARGE SCALE GENOMIC DNA]</scope>
    <source>
        <strain>ATCC BAA-1158 / Py2</strain>
    </source>
</reference>
<comment type="function">
    <text evidence="1">Catalyzes amidations at positions B, D, E, and G on adenosylcobyrinic A,C-diamide. NH(2) groups are provided by glutamine, and one molecule of ATP is hydrogenolyzed for each amidation.</text>
</comment>
<comment type="pathway">
    <text evidence="1">Cofactor biosynthesis; adenosylcobalamin biosynthesis.</text>
</comment>
<comment type="similarity">
    <text evidence="1">Belongs to the CobB/CobQ family. CobQ subfamily.</text>
</comment>
<organism>
    <name type="scientific">Xanthobacter autotrophicus (strain ATCC BAA-1158 / Py2)</name>
    <dbReference type="NCBI Taxonomy" id="78245"/>
    <lineage>
        <taxon>Bacteria</taxon>
        <taxon>Pseudomonadati</taxon>
        <taxon>Pseudomonadota</taxon>
        <taxon>Alphaproteobacteria</taxon>
        <taxon>Hyphomicrobiales</taxon>
        <taxon>Xanthobacteraceae</taxon>
        <taxon>Xanthobacter</taxon>
    </lineage>
</organism>
<keyword id="KW-0169">Cobalamin biosynthesis</keyword>
<keyword id="KW-0315">Glutamine amidotransferase</keyword>
<keyword id="KW-1185">Reference proteome</keyword>